<protein>
    <recommendedName>
        <fullName evidence="1">Erythronate-4-phosphate dehydrogenase</fullName>
        <ecNumber evidence="1">1.1.1.290</ecNumber>
    </recommendedName>
</protein>
<keyword id="KW-0963">Cytoplasm</keyword>
<keyword id="KW-0520">NAD</keyword>
<keyword id="KW-0560">Oxidoreductase</keyword>
<keyword id="KW-0664">Pyridoxine biosynthesis</keyword>
<evidence type="ECO:0000255" key="1">
    <source>
        <dbReference type="HAMAP-Rule" id="MF_01825"/>
    </source>
</evidence>
<feature type="chain" id="PRO_1000070405" description="Erythronate-4-phosphate dehydrogenase">
    <location>
        <begin position="1"/>
        <end position="380"/>
    </location>
</feature>
<feature type="active site" evidence="1">
    <location>
        <position position="207"/>
    </location>
</feature>
<feature type="active site" evidence="1">
    <location>
        <position position="236"/>
    </location>
</feature>
<feature type="active site" description="Proton donor" evidence="1">
    <location>
        <position position="253"/>
    </location>
</feature>
<feature type="binding site" evidence="1">
    <location>
        <position position="45"/>
    </location>
    <ligand>
        <name>substrate</name>
    </ligand>
</feature>
<feature type="binding site" evidence="1">
    <location>
        <position position="66"/>
    </location>
    <ligand>
        <name>substrate</name>
    </ligand>
</feature>
<feature type="binding site" evidence="1">
    <location>
        <position position="146"/>
    </location>
    <ligand>
        <name>NAD(+)</name>
        <dbReference type="ChEBI" id="CHEBI:57540"/>
    </ligand>
</feature>
<feature type="binding site" evidence="1">
    <location>
        <position position="174"/>
    </location>
    <ligand>
        <name>NAD(+)</name>
        <dbReference type="ChEBI" id="CHEBI:57540"/>
    </ligand>
</feature>
<feature type="binding site" evidence="1">
    <location>
        <begin position="205"/>
        <end position="207"/>
    </location>
    <ligand>
        <name>NAD(+)</name>
        <dbReference type="ChEBI" id="CHEBI:57540"/>
    </ligand>
</feature>
<feature type="binding site" evidence="1">
    <location>
        <position position="231"/>
    </location>
    <ligand>
        <name>NAD(+)</name>
        <dbReference type="ChEBI" id="CHEBI:57540"/>
    </ligand>
</feature>
<feature type="binding site" evidence="1">
    <location>
        <position position="256"/>
    </location>
    <ligand>
        <name>NAD(+)</name>
        <dbReference type="ChEBI" id="CHEBI:57540"/>
    </ligand>
</feature>
<feature type="binding site" evidence="1">
    <location>
        <position position="257"/>
    </location>
    <ligand>
        <name>substrate</name>
    </ligand>
</feature>
<sequence>MLIVADENIPLLDAFFQGFGEIRRYPGRSLDAASVKDADILLVRSVTKVDRQLLEGSRVRFVGTCTIGTDHLDLDYFAEAGIRWSSAPGCNARGVVDYVLGSLLTLAELDGVALPERVYGVVGAGEVGGRLVRVLHGLGWKVLVCDPLRQAAEGGDYVSLETILQQCDVISLHTPLQRGGQHPTWHLLGQAQLAQLRPGAWLVNASRGPVVDNVALRELLLDREDVHAVLDVWEGEPQVDLTLADLCTLATPHIAGYSLDGRQRGTAQIYQALCRFLGVNEQVRLAELLPKPPLAQIELDASTDLSWALATLCRAVYDPRRDDADFRRSLSDDPQQQRAAFDQLRKQYPQRREIEGLAVRLHGEAPQLAQLVSALGGVLV</sequence>
<gene>
    <name evidence="1" type="primary">pdxB</name>
    <name type="ordered locus">Pput_3624</name>
</gene>
<comment type="function">
    <text evidence="1">Catalyzes the oxidation of erythronate-4-phosphate to 3-hydroxy-2-oxo-4-phosphonooxybutanoate.</text>
</comment>
<comment type="catalytic activity">
    <reaction evidence="1">
        <text>4-phospho-D-erythronate + NAD(+) = (R)-3-hydroxy-2-oxo-4-phosphooxybutanoate + NADH + H(+)</text>
        <dbReference type="Rhea" id="RHEA:18829"/>
        <dbReference type="ChEBI" id="CHEBI:15378"/>
        <dbReference type="ChEBI" id="CHEBI:57540"/>
        <dbReference type="ChEBI" id="CHEBI:57945"/>
        <dbReference type="ChEBI" id="CHEBI:58538"/>
        <dbReference type="ChEBI" id="CHEBI:58766"/>
        <dbReference type="EC" id="1.1.1.290"/>
    </reaction>
</comment>
<comment type="pathway">
    <text evidence="1">Cofactor biosynthesis; pyridoxine 5'-phosphate biosynthesis; pyridoxine 5'-phosphate from D-erythrose 4-phosphate: step 2/5.</text>
</comment>
<comment type="subunit">
    <text evidence="1">Homodimer.</text>
</comment>
<comment type="subcellular location">
    <subcellularLocation>
        <location evidence="1">Cytoplasm</location>
    </subcellularLocation>
</comment>
<comment type="similarity">
    <text evidence="1">Belongs to the D-isomer specific 2-hydroxyacid dehydrogenase family. PdxB subfamily.</text>
</comment>
<reference key="1">
    <citation type="submission" date="2007-05" db="EMBL/GenBank/DDBJ databases">
        <title>Complete sequence of Pseudomonas putida F1.</title>
        <authorList>
            <consortium name="US DOE Joint Genome Institute"/>
            <person name="Copeland A."/>
            <person name="Lucas S."/>
            <person name="Lapidus A."/>
            <person name="Barry K."/>
            <person name="Detter J.C."/>
            <person name="Glavina del Rio T."/>
            <person name="Hammon N."/>
            <person name="Israni S."/>
            <person name="Dalin E."/>
            <person name="Tice H."/>
            <person name="Pitluck S."/>
            <person name="Chain P."/>
            <person name="Malfatti S."/>
            <person name="Shin M."/>
            <person name="Vergez L."/>
            <person name="Schmutz J."/>
            <person name="Larimer F."/>
            <person name="Land M."/>
            <person name="Hauser L."/>
            <person name="Kyrpides N."/>
            <person name="Lykidis A."/>
            <person name="Parales R."/>
            <person name="Richardson P."/>
        </authorList>
    </citation>
    <scope>NUCLEOTIDE SEQUENCE [LARGE SCALE GENOMIC DNA]</scope>
    <source>
        <strain>ATCC 700007 / DSM 6899 / JCM 31910 / BCRC 17059 / LMG 24140 / F1</strain>
    </source>
</reference>
<accession>A5W6I8</accession>
<name>PDXB_PSEP1</name>
<proteinExistence type="inferred from homology"/>
<dbReference type="EC" id="1.1.1.290" evidence="1"/>
<dbReference type="EMBL" id="CP000712">
    <property type="protein sequence ID" value="ABQ79748.1"/>
    <property type="molecule type" value="Genomic_DNA"/>
</dbReference>
<dbReference type="SMR" id="A5W6I8"/>
<dbReference type="KEGG" id="ppf:Pput_3624"/>
<dbReference type="eggNOG" id="COG0111">
    <property type="taxonomic scope" value="Bacteria"/>
</dbReference>
<dbReference type="HOGENOM" id="CLU_019796_4_0_6"/>
<dbReference type="UniPathway" id="UPA00244">
    <property type="reaction ID" value="UER00310"/>
</dbReference>
<dbReference type="GO" id="GO:0005737">
    <property type="term" value="C:cytoplasm"/>
    <property type="evidence" value="ECO:0007669"/>
    <property type="project" value="UniProtKB-SubCell"/>
</dbReference>
<dbReference type="GO" id="GO:0033711">
    <property type="term" value="F:4-phosphoerythronate dehydrogenase activity"/>
    <property type="evidence" value="ECO:0007669"/>
    <property type="project" value="UniProtKB-EC"/>
</dbReference>
<dbReference type="GO" id="GO:0051287">
    <property type="term" value="F:NAD binding"/>
    <property type="evidence" value="ECO:0007669"/>
    <property type="project" value="InterPro"/>
</dbReference>
<dbReference type="GO" id="GO:0046983">
    <property type="term" value="F:protein dimerization activity"/>
    <property type="evidence" value="ECO:0007669"/>
    <property type="project" value="InterPro"/>
</dbReference>
<dbReference type="GO" id="GO:0008615">
    <property type="term" value="P:pyridoxine biosynthetic process"/>
    <property type="evidence" value="ECO:0007669"/>
    <property type="project" value="UniProtKB-UniRule"/>
</dbReference>
<dbReference type="CDD" id="cd12158">
    <property type="entry name" value="ErythrP_dh"/>
    <property type="match status" value="1"/>
</dbReference>
<dbReference type="Gene3D" id="3.30.1370.170">
    <property type="match status" value="1"/>
</dbReference>
<dbReference type="Gene3D" id="3.40.50.720">
    <property type="entry name" value="NAD(P)-binding Rossmann-like Domain"/>
    <property type="match status" value="2"/>
</dbReference>
<dbReference type="HAMAP" id="MF_01825">
    <property type="entry name" value="PdxB"/>
    <property type="match status" value="1"/>
</dbReference>
<dbReference type="InterPro" id="IPR050418">
    <property type="entry name" value="D-iso_2-hydroxyacid_DH_PdxB"/>
</dbReference>
<dbReference type="InterPro" id="IPR006139">
    <property type="entry name" value="D-isomer_2_OHA_DH_cat_dom"/>
</dbReference>
<dbReference type="InterPro" id="IPR029753">
    <property type="entry name" value="D-isomer_DH_CS"/>
</dbReference>
<dbReference type="InterPro" id="IPR006140">
    <property type="entry name" value="D-isomer_DH_NAD-bd"/>
</dbReference>
<dbReference type="InterPro" id="IPR020921">
    <property type="entry name" value="Erythronate-4-P_DHase"/>
</dbReference>
<dbReference type="InterPro" id="IPR024531">
    <property type="entry name" value="Erythronate-4-P_DHase_dimer"/>
</dbReference>
<dbReference type="InterPro" id="IPR036291">
    <property type="entry name" value="NAD(P)-bd_dom_sf"/>
</dbReference>
<dbReference type="InterPro" id="IPR038251">
    <property type="entry name" value="PdxB_dimer_sf"/>
</dbReference>
<dbReference type="NCBIfam" id="NF001309">
    <property type="entry name" value="PRK00257.1"/>
    <property type="match status" value="1"/>
</dbReference>
<dbReference type="PANTHER" id="PTHR43761:SF1">
    <property type="entry name" value="D-ISOMER SPECIFIC 2-HYDROXYACID DEHYDROGENASE CATALYTIC DOMAIN-CONTAINING PROTEIN-RELATED"/>
    <property type="match status" value="1"/>
</dbReference>
<dbReference type="PANTHER" id="PTHR43761">
    <property type="entry name" value="D-ISOMER SPECIFIC 2-HYDROXYACID DEHYDROGENASE FAMILY PROTEIN (AFU_ORTHOLOGUE AFUA_1G13630)"/>
    <property type="match status" value="1"/>
</dbReference>
<dbReference type="Pfam" id="PF00389">
    <property type="entry name" value="2-Hacid_dh"/>
    <property type="match status" value="1"/>
</dbReference>
<dbReference type="Pfam" id="PF02826">
    <property type="entry name" value="2-Hacid_dh_C"/>
    <property type="match status" value="1"/>
</dbReference>
<dbReference type="Pfam" id="PF11890">
    <property type="entry name" value="DUF3410"/>
    <property type="match status" value="1"/>
</dbReference>
<dbReference type="SUPFAM" id="SSF52283">
    <property type="entry name" value="Formate/glycerate dehydrogenase catalytic domain-like"/>
    <property type="match status" value="1"/>
</dbReference>
<dbReference type="SUPFAM" id="SSF51735">
    <property type="entry name" value="NAD(P)-binding Rossmann-fold domains"/>
    <property type="match status" value="1"/>
</dbReference>
<dbReference type="PROSITE" id="PS00671">
    <property type="entry name" value="D_2_HYDROXYACID_DH_3"/>
    <property type="match status" value="1"/>
</dbReference>
<organism>
    <name type="scientific">Pseudomonas putida (strain ATCC 700007 / DSM 6899 / JCM 31910 / BCRC 17059 / LMG 24140 / F1)</name>
    <dbReference type="NCBI Taxonomy" id="351746"/>
    <lineage>
        <taxon>Bacteria</taxon>
        <taxon>Pseudomonadati</taxon>
        <taxon>Pseudomonadota</taxon>
        <taxon>Gammaproteobacteria</taxon>
        <taxon>Pseudomonadales</taxon>
        <taxon>Pseudomonadaceae</taxon>
        <taxon>Pseudomonas</taxon>
    </lineage>
</organism>